<proteinExistence type="evidence at protein level"/>
<gene>
    <name evidence="12" type="primary">Atp5f1b</name>
    <name type="synonym">Atp5b</name>
</gene>
<comment type="function">
    <text evidence="2 8">Catalytic subunit beta, of the soluble F(1) head domain within the mitochondrial ATP synthase complex (F(1)F(0) ATP synthase or complex V) that produces ATP from ADP and phosphate inorganique in the presence of a proton gradient across the membrane which is generated by electron transport complexes of the respiratory chain (PubMed:2531579). With the non-catalytic subunit alpha (ATP5F1A), forms the catalytic core in the F(1) domain. ATP synthase complex consist of two structural domains, F(1) - containing the extramembraneous catalytic core, and F(0) - containing the membrane proton channel, linked together by a central stalk and a peripheral stalk. During catalysis, ATP synthesis in the catalytic domain of F(1) is coupled via a rotary mechanism of the central stalk subunits to proton translocation (By similarity).</text>
</comment>
<comment type="function">
    <text evidence="2 3 9">Catalytic subunit beta, of the mitochondrial membrane ATP synthase complex (F(1)F(0) ATP synthase or Complex V) that produces ATP from ADP in the presence of a proton gradient across the membrane which is generated by electron transport complexes of the respiratory chain (PubMed:9736690). ATP synthase complex consist of a soluble F(1) head domain - the catalytic core - and a membrane F(1) domain - the membrane proton channel. These two domains are linked by a central stalk rotating inside the F(1) region and a stationary peripheral stalk. During catalysis, ATP synthesis in the catalytic domain of F(1) is coupled via a rotary mechanism of the central stalk subunits to proton translocation (By similarity). In vivo, can only synthesize ATP although its ATP hydrolase activity can be activated artificially in vitro (By similarity). With the subunit alpha (ATP5F1A), forms the catalytic core in the F(1) domain (By similarity).</text>
</comment>
<comment type="catalytic activity">
    <reaction evidence="9">
        <text>ATP + H2O + 4 H(+)(in) = ADP + phosphate + 5 H(+)(out)</text>
        <dbReference type="Rhea" id="RHEA:57720"/>
        <dbReference type="ChEBI" id="CHEBI:15377"/>
        <dbReference type="ChEBI" id="CHEBI:15378"/>
        <dbReference type="ChEBI" id="CHEBI:30616"/>
        <dbReference type="ChEBI" id="CHEBI:43474"/>
        <dbReference type="ChEBI" id="CHEBI:456216"/>
        <dbReference type="EC" id="7.1.2.2"/>
    </reaction>
    <physiologicalReaction direction="right-to-left" evidence="11">
        <dbReference type="Rhea" id="RHEA:57722"/>
    </physiologicalReaction>
</comment>
<comment type="subunit">
    <text evidence="2 4 5 6">Homotrimer (By similarity). Component of the ATP synthase complex composed at least of ATP5F1A/subunit alpha, ATP5F1B/subunit beta, ATP5MC1/subunit c (homooctomer), MT-ATP6/subunit a, MT-ATP8/subunit 8, ATP5ME/subunit e, ATP5MF/subunit f, ATP5MG/subunit g, ATP5MK/subunit k, ATP5MJ/subunit j, ATP5F1C/subunit gamma, ATP5F1D/subunit delta, ATP5F1E/subunit epsilon, ATP5PF/subunit F6, ATP5PB/subunit b, ATP5PD/subunit d, ATP5PO/subunit OSCP (PubMed:17575325). ATP synthase complex consists of a soluble F(1) head domain (subunits alpha(3) and beta(3)) - the catalytic core - and a membrane F(0) domain - the membrane proton channel (subunits c, a, 8, e, f, g, k and j). These two domains are linked by a central stalk (subunits gamma, delta, and epsilon) rotating inside the F1 region and a stationary peripheral stalk (subunits F6, b, d, and OSCP) (By similarity). Interacts with PPIF (By similarity). Interacts with BCL2L1 isoform BCL-X(L); the interaction mediates the association of BCL2L1 isoform BCL-X(L) with the mitochondrial membrane F(1)F(0) ATP synthase and enhances neurons metabolic efficiency (PubMed:21926988). Interacts with CLN5 and PPT1. Interacts with S100A1; this interaction increases F1-ATPase activity (By similarity). Interacts with MTLN. Interacts with TTC5/STRAP; the interaction results in decreased mitochondrial ATP production (By similarity).</text>
</comment>
<comment type="subcellular location">
    <subcellularLocation>
        <location evidence="1">Mitochondrion inner membrane</location>
        <topology evidence="1">Peripheral membrane protein</topology>
        <orientation evidence="1">Matrix side</orientation>
    </subcellularLocation>
</comment>
<comment type="miscellaneous">
    <text>Binds calcium ions.</text>
</comment>
<comment type="similarity">
    <text evidence="10">Belongs to the ATPase alpha/beta chains family.</text>
</comment>
<comment type="sequence caution" evidence="10">
    <conflict type="miscellaneous discrepancy">
        <sequence resource="EMBL-CDS" id="AAB02288"/>
    </conflict>
    <text>Contaminating sequence. Sequence of unknown origin in the N-terminal part.</text>
</comment>
<dbReference type="EC" id="7.1.2.2" evidence="9"/>
<dbReference type="EMBL" id="BC099743">
    <property type="protein sequence ID" value="AAH99743.1"/>
    <property type="molecule type" value="mRNA"/>
</dbReference>
<dbReference type="EMBL" id="M25301">
    <property type="protein sequence ID" value="AAA57154.1"/>
    <property type="molecule type" value="mRNA"/>
</dbReference>
<dbReference type="EMBL" id="M19044">
    <property type="protein sequence ID" value="AAB02288.1"/>
    <property type="status" value="ALT_SEQ"/>
    <property type="molecule type" value="mRNA"/>
</dbReference>
<dbReference type="EMBL" id="M57634">
    <property type="protein sequence ID" value="AAA40778.1"/>
    <property type="molecule type" value="mRNA"/>
</dbReference>
<dbReference type="PIR" id="A28701">
    <property type="entry name" value="A28701"/>
</dbReference>
<dbReference type="PIR" id="A30160">
    <property type="entry name" value="A30160"/>
</dbReference>
<dbReference type="RefSeq" id="NP_599191.1">
    <property type="nucleotide sequence ID" value="NM_134364.1"/>
</dbReference>
<dbReference type="PDB" id="1MAB">
    <property type="method" value="X-ray"/>
    <property type="resolution" value="2.80 A"/>
    <property type="chains" value="B=51-529"/>
</dbReference>
<dbReference type="PDB" id="2F43">
    <property type="method" value="X-ray"/>
    <property type="resolution" value="3.00 A"/>
    <property type="chains" value="B=51-529"/>
</dbReference>
<dbReference type="PDBsum" id="1MAB"/>
<dbReference type="PDBsum" id="2F43"/>
<dbReference type="SMR" id="P10719"/>
<dbReference type="BioGRID" id="251212">
    <property type="interactions" value="10"/>
</dbReference>
<dbReference type="CORUM" id="P10719"/>
<dbReference type="FunCoup" id="P10719">
    <property type="interactions" value="1879"/>
</dbReference>
<dbReference type="IntAct" id="P10719">
    <property type="interactions" value="12"/>
</dbReference>
<dbReference type="MINT" id="P10719"/>
<dbReference type="STRING" id="10116.ENSRNOP00000003965"/>
<dbReference type="ChEMBL" id="CHEMBL2176796"/>
<dbReference type="CarbonylDB" id="P10719"/>
<dbReference type="GlyCosmos" id="P10719">
    <property type="glycosylation" value="1 site, No reported glycans"/>
</dbReference>
<dbReference type="GlyGen" id="P10719">
    <property type="glycosylation" value="10 sites, 1 O-linked glycan (10 sites)"/>
</dbReference>
<dbReference type="iPTMnet" id="P10719"/>
<dbReference type="PhosphoSitePlus" id="P10719"/>
<dbReference type="jPOST" id="P10719"/>
<dbReference type="PaxDb" id="10116-ENSRNOP00000003965"/>
<dbReference type="GeneID" id="171374"/>
<dbReference type="KEGG" id="rno:171374"/>
<dbReference type="UCSC" id="RGD:621368">
    <property type="organism name" value="rat"/>
</dbReference>
<dbReference type="AGR" id="RGD:621368"/>
<dbReference type="CTD" id="506"/>
<dbReference type="RGD" id="621368">
    <property type="gene designation" value="Atp5f1b"/>
</dbReference>
<dbReference type="eggNOG" id="KOG1350">
    <property type="taxonomic scope" value="Eukaryota"/>
</dbReference>
<dbReference type="InParanoid" id="P10719"/>
<dbReference type="OrthoDB" id="14523at2759"/>
<dbReference type="PhylomeDB" id="P10719"/>
<dbReference type="BRENDA" id="7.1.2.2">
    <property type="organism ID" value="5301"/>
</dbReference>
<dbReference type="Reactome" id="R-RNO-1268020">
    <property type="pathway name" value="Mitochondrial protein import"/>
</dbReference>
<dbReference type="Reactome" id="R-RNO-163210">
    <property type="pathway name" value="Formation of ATP by chemiosmotic coupling"/>
</dbReference>
<dbReference type="Reactome" id="R-RNO-8949613">
    <property type="pathway name" value="Cristae formation"/>
</dbReference>
<dbReference type="Reactome" id="R-RNO-9837999">
    <property type="pathway name" value="Mitochondrial protein degradation"/>
</dbReference>
<dbReference type="EvolutionaryTrace" id="P10719"/>
<dbReference type="PRO" id="PR:P10719"/>
<dbReference type="Proteomes" id="UP000002494">
    <property type="component" value="Unplaced"/>
</dbReference>
<dbReference type="GO" id="GO:0009986">
    <property type="term" value="C:cell surface"/>
    <property type="evidence" value="ECO:0000314"/>
    <property type="project" value="RGD"/>
</dbReference>
<dbReference type="GO" id="GO:0016020">
    <property type="term" value="C:membrane"/>
    <property type="evidence" value="ECO:0000266"/>
    <property type="project" value="RGD"/>
</dbReference>
<dbReference type="GO" id="GO:0045121">
    <property type="term" value="C:membrane raft"/>
    <property type="evidence" value="ECO:0000314"/>
    <property type="project" value="CAFA"/>
</dbReference>
<dbReference type="GO" id="GO:0005743">
    <property type="term" value="C:mitochondrial inner membrane"/>
    <property type="evidence" value="ECO:0000314"/>
    <property type="project" value="RGD"/>
</dbReference>
<dbReference type="GO" id="GO:0031966">
    <property type="term" value="C:mitochondrial membrane"/>
    <property type="evidence" value="ECO:0000266"/>
    <property type="project" value="RGD"/>
</dbReference>
<dbReference type="GO" id="GO:0042645">
    <property type="term" value="C:mitochondrial nucleoid"/>
    <property type="evidence" value="ECO:0000266"/>
    <property type="project" value="RGD"/>
</dbReference>
<dbReference type="GO" id="GO:0005739">
    <property type="term" value="C:mitochondrion"/>
    <property type="evidence" value="ECO:0000266"/>
    <property type="project" value="RGD"/>
</dbReference>
<dbReference type="GO" id="GO:0005886">
    <property type="term" value="C:plasma membrane"/>
    <property type="evidence" value="ECO:0000266"/>
    <property type="project" value="RGD"/>
</dbReference>
<dbReference type="GO" id="GO:0045259">
    <property type="term" value="C:proton-transporting ATP synthase complex"/>
    <property type="evidence" value="ECO:0000314"/>
    <property type="project" value="UniProtKB"/>
</dbReference>
<dbReference type="GO" id="GO:0043531">
    <property type="term" value="F:ADP binding"/>
    <property type="evidence" value="ECO:0000314"/>
    <property type="project" value="RGD"/>
</dbReference>
<dbReference type="GO" id="GO:0043532">
    <property type="term" value="F:angiostatin binding"/>
    <property type="evidence" value="ECO:0000266"/>
    <property type="project" value="RGD"/>
</dbReference>
<dbReference type="GO" id="GO:0005524">
    <property type="term" value="F:ATP binding"/>
    <property type="evidence" value="ECO:0000314"/>
    <property type="project" value="RGD"/>
</dbReference>
<dbReference type="GO" id="GO:0016887">
    <property type="term" value="F:ATP hydrolysis activity"/>
    <property type="evidence" value="ECO:0000314"/>
    <property type="project" value="RGD"/>
</dbReference>
<dbReference type="GO" id="GO:0005509">
    <property type="term" value="F:calcium ion binding"/>
    <property type="evidence" value="ECO:0000314"/>
    <property type="project" value="RGD"/>
</dbReference>
<dbReference type="GO" id="GO:0030228">
    <property type="term" value="F:lipoprotein particle receptor activity"/>
    <property type="evidence" value="ECO:0000314"/>
    <property type="project" value="RGD"/>
</dbReference>
<dbReference type="GO" id="GO:0042288">
    <property type="term" value="F:MHC class I protein binding"/>
    <property type="evidence" value="ECO:0000266"/>
    <property type="project" value="RGD"/>
</dbReference>
<dbReference type="GO" id="GO:0046933">
    <property type="term" value="F:proton-transporting ATP synthase activity, rotational mechanism"/>
    <property type="evidence" value="ECO:0000314"/>
    <property type="project" value="UniProtKB"/>
</dbReference>
<dbReference type="GO" id="GO:0046961">
    <property type="term" value="F:proton-transporting ATPase activity, rotational mechanism"/>
    <property type="evidence" value="ECO:0000266"/>
    <property type="project" value="RGD"/>
</dbReference>
<dbReference type="GO" id="GO:0001525">
    <property type="term" value="P:angiogenesis"/>
    <property type="evidence" value="ECO:0000266"/>
    <property type="project" value="RGD"/>
</dbReference>
<dbReference type="GO" id="GO:0006754">
    <property type="term" value="P:ATP biosynthetic process"/>
    <property type="evidence" value="ECO:0000250"/>
    <property type="project" value="UniProtKB"/>
</dbReference>
<dbReference type="GO" id="GO:0098761">
    <property type="term" value="P:cellular response to interleukin-7"/>
    <property type="evidence" value="ECO:0000266"/>
    <property type="project" value="RGD"/>
</dbReference>
<dbReference type="GO" id="GO:1901653">
    <property type="term" value="P:cellular response to peptide"/>
    <property type="evidence" value="ECO:0000270"/>
    <property type="project" value="RGD"/>
</dbReference>
<dbReference type="GO" id="GO:0009631">
    <property type="term" value="P:cold acclimation"/>
    <property type="evidence" value="ECO:0000270"/>
    <property type="project" value="RGD"/>
</dbReference>
<dbReference type="GO" id="GO:0006629">
    <property type="term" value="P:lipid metabolic process"/>
    <property type="evidence" value="ECO:0000266"/>
    <property type="project" value="RGD"/>
</dbReference>
<dbReference type="GO" id="GO:0001889">
    <property type="term" value="P:liver development"/>
    <property type="evidence" value="ECO:0000270"/>
    <property type="project" value="RGD"/>
</dbReference>
<dbReference type="GO" id="GO:0006933">
    <property type="term" value="P:negative regulation of cell adhesion involved in substrate-bound cell migration"/>
    <property type="evidence" value="ECO:0000266"/>
    <property type="project" value="RGD"/>
</dbReference>
<dbReference type="GO" id="GO:0043536">
    <property type="term" value="P:positive regulation of blood vessel endothelial cell migration"/>
    <property type="evidence" value="ECO:0000266"/>
    <property type="project" value="RGD"/>
</dbReference>
<dbReference type="GO" id="GO:0015986">
    <property type="term" value="P:proton motive force-driven ATP synthesis"/>
    <property type="evidence" value="ECO:0000250"/>
    <property type="project" value="UniProtKB"/>
</dbReference>
<dbReference type="GO" id="GO:0042776">
    <property type="term" value="P:proton motive force-driven mitochondrial ATP synthesis"/>
    <property type="evidence" value="ECO:0000266"/>
    <property type="project" value="RGD"/>
</dbReference>
<dbReference type="GO" id="GO:1902600">
    <property type="term" value="P:proton transmembrane transport"/>
    <property type="evidence" value="ECO:0000266"/>
    <property type="project" value="RGD"/>
</dbReference>
<dbReference type="GO" id="GO:0006898">
    <property type="term" value="P:receptor-mediated endocytosis"/>
    <property type="evidence" value="ECO:0000314"/>
    <property type="project" value="RGD"/>
</dbReference>
<dbReference type="GO" id="GO:0051453">
    <property type="term" value="P:regulation of intracellular pH"/>
    <property type="evidence" value="ECO:0000266"/>
    <property type="project" value="RGD"/>
</dbReference>
<dbReference type="GO" id="GO:1905242">
    <property type="term" value="P:response to 3,3',5-triiodo-L-thyronine"/>
    <property type="evidence" value="ECO:0000270"/>
    <property type="project" value="RGD"/>
</dbReference>
<dbReference type="GO" id="GO:1904643">
    <property type="term" value="P:response to curcumin"/>
    <property type="evidence" value="ECO:0000270"/>
    <property type="project" value="RGD"/>
</dbReference>
<dbReference type="GO" id="GO:0010042">
    <property type="term" value="P:response to manganese ion"/>
    <property type="evidence" value="ECO:0000270"/>
    <property type="project" value="RGD"/>
</dbReference>
<dbReference type="CDD" id="cd18110">
    <property type="entry name" value="ATP-synt_F1_beta_C"/>
    <property type="match status" value="1"/>
</dbReference>
<dbReference type="CDD" id="cd18115">
    <property type="entry name" value="ATP-synt_F1_beta_N"/>
    <property type="match status" value="1"/>
</dbReference>
<dbReference type="CDD" id="cd01133">
    <property type="entry name" value="F1-ATPase_beta_CD"/>
    <property type="match status" value="1"/>
</dbReference>
<dbReference type="FunFam" id="1.10.1140.10:FF:000001">
    <property type="entry name" value="ATP synthase subunit beta"/>
    <property type="match status" value="1"/>
</dbReference>
<dbReference type="FunFam" id="2.40.10.170:FF:000004">
    <property type="entry name" value="ATP synthase subunit beta"/>
    <property type="match status" value="1"/>
</dbReference>
<dbReference type="FunFam" id="3.40.50.12240:FF:000006">
    <property type="entry name" value="ATP synthase subunit beta"/>
    <property type="match status" value="1"/>
</dbReference>
<dbReference type="FunFam" id="3.40.50.300:FF:000026">
    <property type="entry name" value="ATP synthase subunit beta"/>
    <property type="match status" value="1"/>
</dbReference>
<dbReference type="Gene3D" id="2.40.10.170">
    <property type="match status" value="1"/>
</dbReference>
<dbReference type="Gene3D" id="1.10.1140.10">
    <property type="entry name" value="Bovine Mitochondrial F1-atpase, Atp Synthase Beta Chain, Chain D, domain 3"/>
    <property type="match status" value="1"/>
</dbReference>
<dbReference type="Gene3D" id="3.40.50.300">
    <property type="entry name" value="P-loop containing nucleotide triphosphate hydrolases"/>
    <property type="match status" value="1"/>
</dbReference>
<dbReference type="HAMAP" id="MF_01347">
    <property type="entry name" value="ATP_synth_beta_bact"/>
    <property type="match status" value="1"/>
</dbReference>
<dbReference type="InterPro" id="IPR003593">
    <property type="entry name" value="AAA+_ATPase"/>
</dbReference>
<dbReference type="InterPro" id="IPR055190">
    <property type="entry name" value="ATP-synt_VA_C"/>
</dbReference>
<dbReference type="InterPro" id="IPR005722">
    <property type="entry name" value="ATP_synth_F1_bsu"/>
</dbReference>
<dbReference type="InterPro" id="IPR020003">
    <property type="entry name" value="ATPase_a/bsu_AS"/>
</dbReference>
<dbReference type="InterPro" id="IPR050053">
    <property type="entry name" value="ATPase_alpha/beta_chains"/>
</dbReference>
<dbReference type="InterPro" id="IPR004100">
    <property type="entry name" value="ATPase_F1/V1/A1_a/bsu_N"/>
</dbReference>
<dbReference type="InterPro" id="IPR036121">
    <property type="entry name" value="ATPase_F1/V1/A1_a/bsu_N_sf"/>
</dbReference>
<dbReference type="InterPro" id="IPR000194">
    <property type="entry name" value="ATPase_F1/V1/A1_a/bsu_nucl-bd"/>
</dbReference>
<dbReference type="InterPro" id="IPR024034">
    <property type="entry name" value="ATPase_F1/V1_b/a_C"/>
</dbReference>
<dbReference type="InterPro" id="IPR027417">
    <property type="entry name" value="P-loop_NTPase"/>
</dbReference>
<dbReference type="NCBIfam" id="TIGR01039">
    <property type="entry name" value="atpD"/>
    <property type="match status" value="1"/>
</dbReference>
<dbReference type="PANTHER" id="PTHR15184">
    <property type="entry name" value="ATP SYNTHASE"/>
    <property type="match status" value="1"/>
</dbReference>
<dbReference type="PANTHER" id="PTHR15184:SF71">
    <property type="entry name" value="ATP SYNTHASE SUBUNIT BETA, MITOCHONDRIAL"/>
    <property type="match status" value="1"/>
</dbReference>
<dbReference type="Pfam" id="PF00006">
    <property type="entry name" value="ATP-synt_ab"/>
    <property type="match status" value="1"/>
</dbReference>
<dbReference type="Pfam" id="PF02874">
    <property type="entry name" value="ATP-synt_ab_N"/>
    <property type="match status" value="1"/>
</dbReference>
<dbReference type="Pfam" id="PF22919">
    <property type="entry name" value="ATP-synt_VA_C"/>
    <property type="match status" value="1"/>
</dbReference>
<dbReference type="PIRSF" id="PIRSF039072">
    <property type="entry name" value="ATPase_subunit_beta"/>
    <property type="match status" value="1"/>
</dbReference>
<dbReference type="SMART" id="SM00382">
    <property type="entry name" value="AAA"/>
    <property type="match status" value="1"/>
</dbReference>
<dbReference type="SUPFAM" id="SSF47917">
    <property type="entry name" value="C-terminal domain of alpha and beta subunits of F1 ATP synthase"/>
    <property type="match status" value="1"/>
</dbReference>
<dbReference type="SUPFAM" id="SSF50615">
    <property type="entry name" value="N-terminal domain of alpha and beta subunits of F1 ATP synthase"/>
    <property type="match status" value="1"/>
</dbReference>
<dbReference type="SUPFAM" id="SSF52540">
    <property type="entry name" value="P-loop containing nucleoside triphosphate hydrolases"/>
    <property type="match status" value="1"/>
</dbReference>
<dbReference type="PROSITE" id="PS00152">
    <property type="entry name" value="ATPASE_ALPHA_BETA"/>
    <property type="match status" value="1"/>
</dbReference>
<reference key="1">
    <citation type="journal article" date="2004" name="Genome Res.">
        <title>The status, quality, and expansion of the NIH full-length cDNA project: the Mammalian Gene Collection (MGC).</title>
        <authorList>
            <consortium name="The MGC Project Team"/>
        </authorList>
    </citation>
    <scope>NUCLEOTIDE SEQUENCE [LARGE SCALE MRNA]</scope>
    <source>
        <tissue>Prostate</tissue>
    </source>
</reference>
<reference key="2">
    <citation type="journal article" date="1989" name="Biochem. Biophys. Res. Commun.">
        <title>Studies on the biogenesis of the mammalian ATP synthase complex: isolation and characterization of a full-length cDNA encoding the rat F1-beta-subunit.</title>
        <authorList>
            <person name="Boulet D."/>
            <person name="Poirier J."/>
            <person name="Cote C."/>
        </authorList>
    </citation>
    <scope>NUCLEOTIDE SEQUENCE [MRNA] OF 1-60</scope>
</reference>
<reference key="3">
    <citation type="journal article" date="1989" name="Biochem. Biophys. Res. Commun.">
        <title>N-terminal sequence of the rat liver beta-subunit in the mitochondrial ATPase-ATPsynthase.</title>
        <authorList>
            <person name="Cretin F."/>
            <person name="Baggetto L.G."/>
            <person name="Denoroy L."/>
            <person name="Godinot C."/>
        </authorList>
    </citation>
    <scope>PROTEIN SEQUENCE OF 47-60</scope>
    <source>
        <tissue>Liver</tissue>
    </source>
</reference>
<reference key="4">
    <citation type="journal article" date="1988" name="Biochemistry">
        <title>Beta subunit of rat liver mitochondrial ATP synthase: cDNA cloning, amino acid sequence, expression in Escherichia coli, and structural relationship to adenylate kinase.</title>
        <authorList>
            <person name="Garboczi D.N."/>
            <person name="Fox A.H."/>
            <person name="Gerring S.L."/>
            <person name="Pedersen P.L."/>
        </authorList>
    </citation>
    <scope>NUCLEOTIDE SEQUENCE [MRNA] OF 58-529</scope>
</reference>
<reference key="5">
    <citation type="journal article" date="1996" name="FEBS Lett.">
        <title>Mitochondrial ATP synthase F1-beta-subunit is a calcium-binding protein.</title>
        <authorList>
            <person name="Hubbard M.J."/>
            <person name="McHugh N.J."/>
        </authorList>
    </citation>
    <scope>PROTEIN SEQUENCE OF 87-98; 208-219; 225-234; 268-279 AND 433-454</scope>
    <scope>CALCIUM-BINDING</scope>
</reference>
<reference key="6">
    <citation type="submission" date="2007-07" db="UniProtKB">
        <authorList>
            <person name="Lubec G."/>
            <person name="Afjehi-Sadat L."/>
            <person name="Chen W.-Q."/>
            <person name="Kang S.U."/>
        </authorList>
    </citation>
    <scope>PROTEIN SEQUENCE OF 95-121; 125-155; 189-198; 202-239; 226-239; 242-259; 265-279; 282-345; 388-422; 427-456 AND 463-480</scope>
    <scope>IDENTIFICATION BY MASS SPECTROMETRY</scope>
    <source>
        <strain>Sprague-Dawley</strain>
        <tissue>Brain</tissue>
        <tissue>Hippocampus</tissue>
        <tissue>Spinal cord</tissue>
    </source>
</reference>
<reference key="7">
    <citation type="journal article" date="1988" name="Taiwan Yi Xue Hui Za Zhi">
        <title>Molecular cloning of cDNA for the rat F1-ATPase beta subunit.</title>
        <authorList>
            <person name="Lee Y.M."/>
            <person name="Chu L.P."/>
            <person name="Lee S.C."/>
        </authorList>
    </citation>
    <scope>NUCLEOTIDE SEQUENCE [MRNA] OF 172-529</scope>
</reference>
<reference key="8">
    <citation type="journal article" date="2003" name="Proteomics">
        <title>Mass spectrometry and tandem mass spectrometry analysis of rat mitochondrial ATP synthase: up-regulation in pancreatic acinar cells treated with cerulein.</title>
        <authorList>
            <person name="Yu J.-H."/>
            <person name="Yun S.-Y."/>
            <person name="Lim J.-W."/>
            <person name="Kim H."/>
            <person name="Kim K.-H."/>
        </authorList>
    </citation>
    <scope>IDENTIFICATION BY MASS SPECTROMETRY</scope>
    <source>
        <tissue>Pancreatic acinar cell</tissue>
    </source>
</reference>
<reference key="9">
    <citation type="journal article" date="2007" name="Mol. Cell. Proteomics">
        <title>Identification of two proteins associated with mammalian ATP synthase.</title>
        <authorList>
            <person name="Meyer B."/>
            <person name="Wittig I."/>
            <person name="Trifilieff E."/>
            <person name="Karas M."/>
            <person name="Schaegger H."/>
        </authorList>
    </citation>
    <scope>IDENTIFICATION BY MASS SPECTROMETRY</scope>
    <scope>IDENTIFICATION IN THE ATP SYNTHASE COMPLEX</scope>
</reference>
<reference key="10">
    <citation type="journal article" date="2011" name="Nat. Cell Biol.">
        <title>Bcl-xL regulates metabolic efficiency of neurons through interaction with the mitochondrial F1FO ATP synthase.</title>
        <authorList>
            <person name="Alavian K.N."/>
            <person name="Li H."/>
            <person name="Collis L."/>
            <person name="Bonanni L."/>
            <person name="Zeng L."/>
            <person name="Sacchetti S."/>
            <person name="Lazrove E."/>
            <person name="Nabili P."/>
            <person name="Flaherty B."/>
            <person name="Graham M."/>
            <person name="Chen Y."/>
            <person name="Messerli S.M."/>
            <person name="Mariggio M.A."/>
            <person name="Rahner C."/>
            <person name="McNay E."/>
            <person name="Shore G.C."/>
            <person name="Smith P.J."/>
            <person name="Hardwick J.M."/>
            <person name="Jonas E.A."/>
        </authorList>
    </citation>
    <scope>INTERACTION WITH BCL2L1</scope>
</reference>
<reference key="11">
    <citation type="journal article" date="2012" name="Nat. Commun.">
        <title>Quantitative maps of protein phosphorylation sites across 14 different rat organs and tissues.</title>
        <authorList>
            <person name="Lundby A."/>
            <person name="Secher A."/>
            <person name="Lage K."/>
            <person name="Nordsborg N.B."/>
            <person name="Dmytriyev A."/>
            <person name="Lundby C."/>
            <person name="Olsen J.V."/>
        </authorList>
    </citation>
    <scope>PHOSPHORYLATION [LARGE SCALE ANALYSIS] AT SER-433 AND SER-529</scope>
    <scope>IDENTIFICATION BY MASS SPECTROMETRY [LARGE SCALE ANALYSIS]</scope>
</reference>
<reference key="12">
    <citation type="journal article" date="2013" name="PLoS ONE">
        <title>Discovery and confirmation of O-GlcNAcylated proteins in rat liver mitochondria by combination of mass spectrometry and immunological methods.</title>
        <authorList>
            <person name="Cao W."/>
            <person name="Cao J."/>
            <person name="Huang J."/>
            <person name="Yao J."/>
            <person name="Yan G."/>
            <person name="Xu H."/>
            <person name="Yang P."/>
        </authorList>
    </citation>
    <scope>GLYCOSYLATION AT SER-106</scope>
</reference>
<reference key="13">
    <citation type="journal article" date="1998" name="Proc. Natl. Acad. Sci. U.S.A.">
        <title>The 2.8-A structure of rat liver F1-ATPase: configuration of a critical intermediate in ATP synthesis/hydrolysis.</title>
        <authorList>
            <person name="Bianchet M.A."/>
            <person name="Hullihen J."/>
            <person name="Pedersen P.L."/>
            <person name="Amzel L.M."/>
        </authorList>
    </citation>
    <scope>X-RAY CRYSTALLOGRAPHY (2.8 ANGSTROMS)</scope>
    <scope>FUNCTION</scope>
    <scope>CATALYTIC ACTIVITY</scope>
</reference>
<feature type="transit peptide" description="Mitochondrion" evidence="8">
    <location>
        <begin position="1"/>
        <end position="46"/>
    </location>
</feature>
<feature type="chain" id="PRO_0000002445" description="ATP synthase F(1) complex catalytic subunit beta, mitochondrial">
    <location>
        <begin position="47"/>
        <end position="529"/>
    </location>
</feature>
<feature type="binding site" evidence="1">
    <location>
        <position position="209"/>
    </location>
    <ligand>
        <name>ADP</name>
        <dbReference type="ChEBI" id="CHEBI:456216"/>
    </ligand>
</feature>
<feature type="binding site" evidence="1">
    <location>
        <position position="209"/>
    </location>
    <ligand>
        <name>ATP</name>
        <dbReference type="ChEBI" id="CHEBI:30616"/>
    </ligand>
</feature>
<feature type="binding site" evidence="1">
    <location>
        <position position="209"/>
    </location>
    <ligand>
        <name>phosphate</name>
        <dbReference type="ChEBI" id="CHEBI:43474"/>
    </ligand>
</feature>
<feature type="binding site" evidence="1">
    <location>
        <position position="210"/>
    </location>
    <ligand>
        <name>ADP</name>
        <dbReference type="ChEBI" id="CHEBI:456216"/>
    </ligand>
</feature>
<feature type="binding site" evidence="1">
    <location>
        <position position="210"/>
    </location>
    <ligand>
        <name>phosphate</name>
        <dbReference type="ChEBI" id="CHEBI:43474"/>
    </ligand>
</feature>
<feature type="binding site" evidence="1">
    <location>
        <position position="211"/>
    </location>
    <ligand>
        <name>ADP</name>
        <dbReference type="ChEBI" id="CHEBI:456216"/>
    </ligand>
</feature>
<feature type="binding site" evidence="1">
    <location>
        <position position="211"/>
    </location>
    <ligand>
        <name>ATP</name>
        <dbReference type="ChEBI" id="CHEBI:30616"/>
    </ligand>
</feature>
<feature type="binding site" evidence="1">
    <location>
        <position position="211"/>
    </location>
    <ligand>
        <name>phosphate</name>
        <dbReference type="ChEBI" id="CHEBI:43474"/>
    </ligand>
</feature>
<feature type="binding site" evidence="1">
    <location>
        <position position="212"/>
    </location>
    <ligand>
        <name>ADP</name>
        <dbReference type="ChEBI" id="CHEBI:456216"/>
    </ligand>
</feature>
<feature type="binding site" evidence="1">
    <location>
        <position position="212"/>
    </location>
    <ligand>
        <name>ATP</name>
        <dbReference type="ChEBI" id="CHEBI:30616"/>
    </ligand>
</feature>
<feature type="binding site" evidence="1">
    <location>
        <position position="212"/>
    </location>
    <ligand>
        <name>phosphate</name>
        <dbReference type="ChEBI" id="CHEBI:43474"/>
    </ligand>
</feature>
<feature type="binding site" evidence="1">
    <location>
        <position position="213"/>
    </location>
    <ligand>
        <name>ADP</name>
        <dbReference type="ChEBI" id="CHEBI:456216"/>
    </ligand>
</feature>
<feature type="binding site" evidence="1">
    <location>
        <position position="213"/>
    </location>
    <ligand>
        <name>ATP</name>
        <dbReference type="ChEBI" id="CHEBI:30616"/>
    </ligand>
</feature>
<feature type="binding site" evidence="1">
    <location>
        <position position="213"/>
    </location>
    <ligand>
        <name>Mg(2+)</name>
        <dbReference type="ChEBI" id="CHEBI:18420"/>
        <label>1</label>
        <note>ligand shared between two neighboring subunits</note>
    </ligand>
</feature>
<feature type="binding site" evidence="1">
    <location>
        <position position="213"/>
    </location>
    <ligand>
        <name>phosphate</name>
        <dbReference type="ChEBI" id="CHEBI:43474"/>
    </ligand>
</feature>
<feature type="binding site" evidence="1">
    <location>
        <position position="214"/>
    </location>
    <ligand>
        <name>ADP</name>
        <dbReference type="ChEBI" id="CHEBI:456216"/>
    </ligand>
</feature>
<feature type="binding site" evidence="1">
    <location>
        <position position="214"/>
    </location>
    <ligand>
        <name>ATP</name>
        <dbReference type="ChEBI" id="CHEBI:30616"/>
    </ligand>
</feature>
<feature type="binding site" evidence="1">
    <location>
        <position position="238"/>
    </location>
    <ligand>
        <name>Mg(2+)</name>
        <dbReference type="ChEBI" id="CHEBI:18420"/>
        <label>2</label>
        <note>ligand shared between two neighboring subunits</note>
    </ligand>
</feature>
<feature type="binding site" evidence="1">
    <location>
        <position position="239"/>
    </location>
    <ligand>
        <name>ATP</name>
        <dbReference type="ChEBI" id="CHEBI:30616"/>
    </ligand>
</feature>
<feature type="modified residue" description="N6-acetyllysine; alternate" evidence="4">
    <location>
        <position position="124"/>
    </location>
</feature>
<feature type="modified residue" description="N6-succinyllysine; alternate" evidence="4">
    <location>
        <position position="124"/>
    </location>
</feature>
<feature type="modified residue" description="N6-acetyllysine; alternate" evidence="2">
    <location>
        <position position="133"/>
    </location>
</feature>
<feature type="modified residue" description="N6-succinyllysine; alternate" evidence="4">
    <location>
        <position position="133"/>
    </location>
</feature>
<feature type="modified residue" description="N6-acetyllysine; alternate" evidence="4">
    <location>
        <position position="161"/>
    </location>
</feature>
<feature type="modified residue" description="N6-succinyllysine; alternate" evidence="4">
    <location>
        <position position="161"/>
    </location>
</feature>
<feature type="modified residue" description="N6-acetyllysine" evidence="2">
    <location>
        <position position="198"/>
    </location>
</feature>
<feature type="modified residue" description="N6-acetyllysine; alternate" evidence="4">
    <location>
        <position position="259"/>
    </location>
</feature>
<feature type="modified residue" description="N6-succinyllysine; alternate" evidence="4">
    <location>
        <position position="259"/>
    </location>
</feature>
<feature type="modified residue" description="N6-acetyllysine; alternate" evidence="4">
    <location>
        <position position="264"/>
    </location>
</feature>
<feature type="modified residue" description="N6-succinyllysine; alternate" evidence="4">
    <location>
        <position position="264"/>
    </location>
</feature>
<feature type="modified residue" description="Phosphothreonine" evidence="4">
    <location>
        <position position="312"/>
    </location>
</feature>
<feature type="modified residue" description="Phosphoserine" evidence="2">
    <location>
        <position position="415"/>
    </location>
</feature>
<feature type="modified residue" description="N6-acetyllysine" evidence="2">
    <location>
        <position position="426"/>
    </location>
</feature>
<feature type="modified residue" description="Phosphoserine" evidence="13">
    <location>
        <position position="433"/>
    </location>
</feature>
<feature type="modified residue" description="N6-acetyllysine" evidence="4">
    <location>
        <position position="480"/>
    </location>
</feature>
<feature type="modified residue" description="N6-acetyllysine" evidence="4">
    <location>
        <position position="485"/>
    </location>
</feature>
<feature type="modified residue" description="N6-acetyllysine; alternate" evidence="4">
    <location>
        <position position="522"/>
    </location>
</feature>
<feature type="modified residue" description="N6-succinyllysine; alternate" evidence="4">
    <location>
        <position position="522"/>
    </location>
</feature>
<feature type="modified residue" description="Phosphoserine" evidence="13">
    <location>
        <position position="529"/>
    </location>
</feature>
<feature type="glycosylation site" description="O-linked (GlcNAc) serine" evidence="7">
    <location>
        <position position="106"/>
    </location>
</feature>
<feature type="sequence conflict" description="In Ref. 7; AAA40778." evidence="10" ref="7">
    <original>NL</original>
    <variation>KV</variation>
    <location>
        <begin position="257"/>
        <end position="258"/>
    </location>
</feature>
<feature type="sequence conflict" description="In Ref. 7; AAA40778." evidence="10" ref="7">
    <original>QD</original>
    <variation>HV</variation>
    <location>
        <begin position="429"/>
        <end position="430"/>
    </location>
</feature>
<feature type="strand" evidence="14">
    <location>
        <begin position="60"/>
        <end position="62"/>
    </location>
</feature>
<feature type="strand" evidence="14">
    <location>
        <begin position="65"/>
        <end position="67"/>
    </location>
</feature>
<feature type="strand" evidence="14">
    <location>
        <begin position="70"/>
        <end position="72"/>
    </location>
</feature>
<feature type="strand" evidence="14">
    <location>
        <begin position="75"/>
        <end position="77"/>
    </location>
</feature>
<feature type="strand" evidence="14">
    <location>
        <begin position="85"/>
        <end position="90"/>
    </location>
</feature>
<feature type="strand" evidence="14">
    <location>
        <begin position="96"/>
        <end position="104"/>
    </location>
</feature>
<feature type="strand" evidence="14">
    <location>
        <begin position="107"/>
        <end position="114"/>
    </location>
</feature>
<feature type="strand" evidence="14">
    <location>
        <begin position="124"/>
        <end position="127"/>
    </location>
</feature>
<feature type="strand" evidence="14">
    <location>
        <begin position="129"/>
        <end position="131"/>
    </location>
</feature>
<feature type="strand" evidence="15">
    <location>
        <begin position="133"/>
        <end position="137"/>
    </location>
</feature>
<feature type="helix" evidence="15">
    <location>
        <begin position="138"/>
        <end position="140"/>
    </location>
</feature>
<feature type="strand" evidence="14">
    <location>
        <begin position="141"/>
        <end position="146"/>
    </location>
</feature>
<feature type="strand" evidence="14">
    <location>
        <begin position="153"/>
        <end position="155"/>
    </location>
</feature>
<feature type="strand" evidence="14">
    <location>
        <begin position="164"/>
        <end position="167"/>
    </location>
</feature>
<feature type="turn" evidence="14">
    <location>
        <begin position="173"/>
        <end position="175"/>
    </location>
</feature>
<feature type="helix" evidence="14">
    <location>
        <begin position="188"/>
        <end position="191"/>
    </location>
</feature>
<feature type="strand" evidence="14">
    <location>
        <begin position="205"/>
        <end position="212"/>
    </location>
</feature>
<feature type="helix" evidence="14">
    <location>
        <begin position="213"/>
        <end position="222"/>
    </location>
</feature>
<feature type="turn" evidence="14">
    <location>
        <begin position="223"/>
        <end position="225"/>
    </location>
</feature>
<feature type="strand" evidence="14">
    <location>
        <begin position="231"/>
        <end position="238"/>
    </location>
</feature>
<feature type="helix" evidence="14">
    <location>
        <begin position="240"/>
        <end position="252"/>
    </location>
</feature>
<feature type="strand" evidence="14">
    <location>
        <begin position="254"/>
        <end position="256"/>
    </location>
</feature>
<feature type="strand" evidence="14">
    <location>
        <begin position="258"/>
        <end position="261"/>
    </location>
</feature>
<feature type="strand" evidence="14">
    <location>
        <begin position="265"/>
        <end position="271"/>
    </location>
</feature>
<feature type="helix" evidence="14">
    <location>
        <begin position="276"/>
        <end position="294"/>
    </location>
</feature>
<feature type="turn" evidence="15">
    <location>
        <begin position="295"/>
        <end position="298"/>
    </location>
</feature>
<feature type="strand" evidence="14">
    <location>
        <begin position="301"/>
        <end position="306"/>
    </location>
</feature>
<feature type="helix" evidence="14">
    <location>
        <begin position="310"/>
        <end position="316"/>
    </location>
</feature>
<feature type="helix" evidence="14">
    <location>
        <begin position="320"/>
        <end position="322"/>
    </location>
</feature>
<feature type="helix" evidence="14">
    <location>
        <begin position="335"/>
        <end position="343"/>
    </location>
</feature>
<feature type="strand" evidence="14">
    <location>
        <begin position="354"/>
        <end position="357"/>
    </location>
</feature>
<feature type="helix" evidence="14">
    <location>
        <begin position="363"/>
        <end position="365"/>
    </location>
</feature>
<feature type="helix" evidence="14">
    <location>
        <begin position="372"/>
        <end position="376"/>
    </location>
</feature>
<feature type="helix" evidence="14">
    <location>
        <begin position="387"/>
        <end position="390"/>
    </location>
</feature>
<feature type="turn" evidence="15">
    <location>
        <begin position="391"/>
        <end position="393"/>
    </location>
</feature>
<feature type="strand" evidence="14">
    <location>
        <begin position="400"/>
        <end position="402"/>
    </location>
</feature>
<feature type="turn" evidence="14">
    <location>
        <begin position="410"/>
        <end position="414"/>
    </location>
</feature>
<feature type="helix" evidence="14">
    <location>
        <begin position="415"/>
        <end position="434"/>
    </location>
</feature>
<feature type="turn" evidence="14">
    <location>
        <begin position="435"/>
        <end position="439"/>
    </location>
</feature>
<feature type="helix" evidence="14">
    <location>
        <begin position="448"/>
        <end position="464"/>
    </location>
</feature>
<feature type="helix" evidence="14">
    <location>
        <begin position="469"/>
        <end position="471"/>
    </location>
</feature>
<feature type="helix" evidence="14">
    <location>
        <begin position="472"/>
        <end position="475"/>
    </location>
</feature>
<feature type="strand" evidence="14">
    <location>
        <begin position="483"/>
        <end position="485"/>
    </location>
</feature>
<feature type="turn" evidence="14">
    <location>
        <begin position="486"/>
        <end position="489"/>
    </location>
</feature>
<feature type="helix" evidence="14">
    <location>
        <begin position="490"/>
        <end position="496"/>
    </location>
</feature>
<feature type="turn" evidence="15">
    <location>
        <begin position="498"/>
        <end position="501"/>
    </location>
</feature>
<feature type="helix" evidence="14">
    <location>
        <begin position="504"/>
        <end position="507"/>
    </location>
</feature>
<feature type="helix" evidence="14">
    <location>
        <begin position="514"/>
        <end position="520"/>
    </location>
</feature>
<feature type="turn" evidence="15">
    <location>
        <begin position="521"/>
        <end position="523"/>
    </location>
</feature>
<organism>
    <name type="scientific">Rattus norvegicus</name>
    <name type="common">Rat</name>
    <dbReference type="NCBI Taxonomy" id="10116"/>
    <lineage>
        <taxon>Eukaryota</taxon>
        <taxon>Metazoa</taxon>
        <taxon>Chordata</taxon>
        <taxon>Craniata</taxon>
        <taxon>Vertebrata</taxon>
        <taxon>Euteleostomi</taxon>
        <taxon>Mammalia</taxon>
        <taxon>Eutheria</taxon>
        <taxon>Euarchontoglires</taxon>
        <taxon>Glires</taxon>
        <taxon>Rodentia</taxon>
        <taxon>Myomorpha</taxon>
        <taxon>Muroidea</taxon>
        <taxon>Muridae</taxon>
        <taxon>Murinae</taxon>
        <taxon>Rattus</taxon>
    </lineage>
</organism>
<protein>
    <recommendedName>
        <fullName evidence="10">ATP synthase F(1) complex catalytic subunit beta, mitochondrial</fullName>
        <ecNumber evidence="9">7.1.2.2</ecNumber>
    </recommendedName>
    <alternativeName>
        <fullName evidence="12">ATP synthase F1 subunit beta</fullName>
    </alternativeName>
</protein>
<evidence type="ECO:0000250" key="1">
    <source>
        <dbReference type="UniProtKB" id="P00829"/>
    </source>
</evidence>
<evidence type="ECO:0000250" key="2">
    <source>
        <dbReference type="UniProtKB" id="P06576"/>
    </source>
</evidence>
<evidence type="ECO:0000250" key="3">
    <source>
        <dbReference type="UniProtKB" id="P19483"/>
    </source>
</evidence>
<evidence type="ECO:0000250" key="4">
    <source>
        <dbReference type="UniProtKB" id="P56480"/>
    </source>
</evidence>
<evidence type="ECO:0000269" key="5">
    <source>
    </source>
</evidence>
<evidence type="ECO:0000269" key="6">
    <source>
    </source>
</evidence>
<evidence type="ECO:0000269" key="7">
    <source>
    </source>
</evidence>
<evidence type="ECO:0000269" key="8">
    <source>
    </source>
</evidence>
<evidence type="ECO:0000269" key="9">
    <source>
    </source>
</evidence>
<evidence type="ECO:0000305" key="10"/>
<evidence type="ECO:0000305" key="11">
    <source>
    </source>
</evidence>
<evidence type="ECO:0000312" key="12">
    <source>
        <dbReference type="RGD" id="621368"/>
    </source>
</evidence>
<evidence type="ECO:0007744" key="13">
    <source>
    </source>
</evidence>
<evidence type="ECO:0007829" key="14">
    <source>
        <dbReference type="PDB" id="1MAB"/>
    </source>
</evidence>
<evidence type="ECO:0007829" key="15">
    <source>
        <dbReference type="PDB" id="2F43"/>
    </source>
</evidence>
<accession>P10719</accession>
<accession>Q499W0</accession>
<sequence>MLSLVGRVASASASGALRGLNPLAALPQAHLLLRTAPAGVHPARDYAAQSSAAPKAGTATGQIVAVIGAVVDVQFDEGLPPILNALEVQGRESRLVLEVAQHLGESTVRTIAMDGTEGLVRGQKVLDSGAPIKIPVGPETLGRIMNVIGEPIDERGPIKTKQFAPIHAEAPEFIEMSVEQEILVTGIKVVDLLAPYAKGGKIGLFGGAGVGKTVLIMELINNVAKAHGGYSVFAGVGERTREGNDLYHEMIESGVINLKDATSKVALVYGQMNEPPGARARVALTGLTVAEYFRDQEGQDVLLFIDNIFRFTQAGSEVSALLGRIPSAVGYQPTLATDMGTMQERITTTKKGSITSVQAIYVPADDLTDPAPATTFAHLDATTVLSRAIAELGIYPAVDPLDSTSRIMDPNIVGSEHYDVARGVQKILQDYKSLQDIIAILGMDELSEEDKLTVSRARKIQRFLSQPFQVAEVFTGHMGKLVPLKETIKGFQQILAGDYDHLPEQAFYMVGPIEEAVAKADKLAEEHGS</sequence>
<name>ATPB_RAT</name>
<keyword id="KW-0002">3D-structure</keyword>
<keyword id="KW-0007">Acetylation</keyword>
<keyword id="KW-0066">ATP synthesis</keyword>
<keyword id="KW-0067">ATP-binding</keyword>
<keyword id="KW-0139">CF(1)</keyword>
<keyword id="KW-0903">Direct protein sequencing</keyword>
<keyword id="KW-0325">Glycoprotein</keyword>
<keyword id="KW-0375">Hydrogen ion transport</keyword>
<keyword id="KW-0406">Ion transport</keyword>
<keyword id="KW-0460">Magnesium</keyword>
<keyword id="KW-0472">Membrane</keyword>
<keyword id="KW-0479">Metal-binding</keyword>
<keyword id="KW-0496">Mitochondrion</keyword>
<keyword id="KW-0999">Mitochondrion inner membrane</keyword>
<keyword id="KW-0547">Nucleotide-binding</keyword>
<keyword id="KW-0597">Phosphoprotein</keyword>
<keyword id="KW-1185">Reference proteome</keyword>
<keyword id="KW-0809">Transit peptide</keyword>
<keyword id="KW-1278">Translocase</keyword>
<keyword id="KW-0813">Transport</keyword>